<keyword id="KW-0325">Glycoprotein</keyword>
<keyword id="KW-0597">Phosphoprotein</keyword>
<keyword id="KW-0646">Protease inhibitor</keyword>
<keyword id="KW-0654">Proteoglycan</keyword>
<keyword id="KW-1185">Reference proteome</keyword>
<keyword id="KW-0964">Secreted</keyword>
<keyword id="KW-0722">Serine protease inhibitor</keyword>
<keyword id="KW-0732">Signal</keyword>
<proteinExistence type="evidence at transcript level"/>
<accession>Q29052</accession>
<accession>O02669</accession>
<organism>
    <name type="scientific">Sus scrofa</name>
    <name type="common">Pig</name>
    <dbReference type="NCBI Taxonomy" id="9823"/>
    <lineage>
        <taxon>Eukaryota</taxon>
        <taxon>Metazoa</taxon>
        <taxon>Chordata</taxon>
        <taxon>Craniata</taxon>
        <taxon>Vertebrata</taxon>
        <taxon>Euteleostomi</taxon>
        <taxon>Mammalia</taxon>
        <taxon>Eutheria</taxon>
        <taxon>Laurasiatheria</taxon>
        <taxon>Artiodactyla</taxon>
        <taxon>Suina</taxon>
        <taxon>Suidae</taxon>
        <taxon>Sus</taxon>
    </lineage>
</organism>
<sequence length="902" mass="100395">MDGTMGLQGLLCLCLASHLALQAMPTQGSPTDSTKGNKAVNGVVIRSLKVNCKVTSRFAHYVVTSQVVNNTNKPKEVAFDVEIPKTAFISDFAITADENTFVGDIKDKVTAWKQYRKAAISGENSGLVRASGRTMEQFTIHVTIGPRSKATFQLTYEEVLRRKLTQYDIVIKVKPKQLVQHFEIDVDIFEPQGISKLDAQASFLSKEAAAQLIKKSFSGKKGHVLFRPTVGQQQSCSTCSTTLLNGDFKVTYDVNREKLCDLLVANNYFAHFFAPQNLTKLNKNVVFVIDISSSMEGQKVKQTKEALLKILSDLKPGDYFDLVLFGSAVQSWRGSLVQASTANLDAARSYVRQFSLAGSTNLNGGLLRGIEILNKAQGSLPEFSNRASILIMLTDGEPTEGVTDRSQILKNVRDAIRGRFPLYNLGFGHDVEWNFLEVRALENNGRAQRIYEDHDSAQQLQGFYDQVANPLLKDVELQYPADAVLALTQHRHKQYYEGSEITVAGRIADNKLSSFKADVQASGDQGFKTTCLVDEEEMKKLLQERGHMLENYVERLWAYLTIQELLAKRMKLEWAEKASVSAKALQMSLDYQFVTPLTSMTIRGMADKDGLEPVIDKPLEDSQPLEMLGPRRKFVLSASQPSPTHPSSSIQKLPDRVTGVDTDPHFIIRVPQKEDTLCFNINEEPGVVLSLVQDPDTGFSVNGQLIGNEARCPGKHEGTYFGRLGIANPATGFQLEVTPQNITLNPGSGGPVFSWRDQASLRQDEVVVTINRKRNLGVVREDGGTFEVVLHRLWKGSAIHQDFLGFYVLDSHRMSARTHGLLAQFFHPFDYKVSDIHPGSDPTKTDATMVVKNRQLTVTRGLQKDYSKDPRHGLKVTCWFIHNNGDGLIDGVHTDYIVPDIF</sequence>
<dbReference type="EMBL" id="D38754">
    <property type="protein sequence ID" value="BAA07632.1"/>
    <property type="molecule type" value="mRNA"/>
</dbReference>
<dbReference type="EMBL" id="Y11546">
    <property type="protein sequence ID" value="CAA72309.1"/>
    <property type="molecule type" value="mRNA"/>
</dbReference>
<dbReference type="RefSeq" id="NP_999089.1">
    <property type="nucleotide sequence ID" value="NM_213924.1"/>
</dbReference>
<dbReference type="SMR" id="Q29052"/>
<dbReference type="FunCoup" id="Q29052">
    <property type="interactions" value="103"/>
</dbReference>
<dbReference type="STRING" id="9823.ENSSSCP00000050745"/>
<dbReference type="GlyCosmos" id="Q29052">
    <property type="glycosylation" value="6 sites, No reported glycans"/>
</dbReference>
<dbReference type="GlyGen" id="Q29052">
    <property type="glycosylation" value="6 sites"/>
</dbReference>
<dbReference type="PaxDb" id="9823-ENSSSCP00000012202"/>
<dbReference type="PeptideAtlas" id="Q29052"/>
<dbReference type="GeneID" id="396963"/>
<dbReference type="KEGG" id="ssc:396963"/>
<dbReference type="CTD" id="3697"/>
<dbReference type="eggNOG" id="ENOG502RXR2">
    <property type="taxonomic scope" value="Eukaryota"/>
</dbReference>
<dbReference type="InParanoid" id="Q29052"/>
<dbReference type="OrthoDB" id="299997at2759"/>
<dbReference type="Proteomes" id="UP000008227">
    <property type="component" value="Unplaced"/>
</dbReference>
<dbReference type="Proteomes" id="UP000314985">
    <property type="component" value="Unplaced"/>
</dbReference>
<dbReference type="Proteomes" id="UP000694570">
    <property type="component" value="Unplaced"/>
</dbReference>
<dbReference type="Proteomes" id="UP000694571">
    <property type="component" value="Unplaced"/>
</dbReference>
<dbReference type="Proteomes" id="UP000694720">
    <property type="component" value="Unplaced"/>
</dbReference>
<dbReference type="Proteomes" id="UP000694722">
    <property type="component" value="Unplaced"/>
</dbReference>
<dbReference type="Proteomes" id="UP000694723">
    <property type="component" value="Unplaced"/>
</dbReference>
<dbReference type="Proteomes" id="UP000694724">
    <property type="component" value="Unplaced"/>
</dbReference>
<dbReference type="Proteomes" id="UP000694725">
    <property type="component" value="Unplaced"/>
</dbReference>
<dbReference type="Proteomes" id="UP000694726">
    <property type="component" value="Unplaced"/>
</dbReference>
<dbReference type="Proteomes" id="UP000694727">
    <property type="component" value="Unplaced"/>
</dbReference>
<dbReference type="Proteomes" id="UP000694728">
    <property type="component" value="Unplaced"/>
</dbReference>
<dbReference type="GO" id="GO:0005576">
    <property type="term" value="C:extracellular region"/>
    <property type="evidence" value="ECO:0007669"/>
    <property type="project" value="UniProtKB-SubCell"/>
</dbReference>
<dbReference type="GO" id="GO:0004867">
    <property type="term" value="F:serine-type endopeptidase inhibitor activity"/>
    <property type="evidence" value="ECO:0007669"/>
    <property type="project" value="UniProtKB-KW"/>
</dbReference>
<dbReference type="GO" id="GO:0030212">
    <property type="term" value="P:hyaluronan metabolic process"/>
    <property type="evidence" value="ECO:0007669"/>
    <property type="project" value="InterPro"/>
</dbReference>
<dbReference type="CDD" id="cd01461">
    <property type="entry name" value="vWA_interalpha_trypsin_inhibitor"/>
    <property type="match status" value="1"/>
</dbReference>
<dbReference type="FunFam" id="3.40.50.410:FF:000013">
    <property type="entry name" value="inter-alpha-trypsin inhibitor heavy chain H2"/>
    <property type="match status" value="1"/>
</dbReference>
<dbReference type="Gene3D" id="3.40.50.410">
    <property type="entry name" value="von Willebrand factor, type A domain"/>
    <property type="match status" value="1"/>
</dbReference>
<dbReference type="InterPro" id="IPR010600">
    <property type="entry name" value="ITI_HC_C"/>
</dbReference>
<dbReference type="InterPro" id="IPR050934">
    <property type="entry name" value="ITIH"/>
</dbReference>
<dbReference type="InterPro" id="IPR013694">
    <property type="entry name" value="VIT"/>
</dbReference>
<dbReference type="InterPro" id="IPR002035">
    <property type="entry name" value="VWF_A"/>
</dbReference>
<dbReference type="InterPro" id="IPR036465">
    <property type="entry name" value="vWFA_dom_sf"/>
</dbReference>
<dbReference type="PANTHER" id="PTHR10338">
    <property type="entry name" value="INTER-ALPHA-TRYPSIN INHIBITOR HEAVY CHAIN FAMILY MEMBER"/>
    <property type="match status" value="1"/>
</dbReference>
<dbReference type="PANTHER" id="PTHR10338:SF106">
    <property type="entry name" value="INTER-ALPHA-TRYPSIN INHIBITOR HEAVY CHAIN H1"/>
    <property type="match status" value="1"/>
</dbReference>
<dbReference type="Pfam" id="PF06668">
    <property type="entry name" value="ITI_HC_C"/>
    <property type="match status" value="1"/>
</dbReference>
<dbReference type="Pfam" id="PF08487">
    <property type="entry name" value="VIT"/>
    <property type="match status" value="1"/>
</dbReference>
<dbReference type="Pfam" id="PF00092">
    <property type="entry name" value="VWA"/>
    <property type="match status" value="1"/>
</dbReference>
<dbReference type="SMART" id="SM00609">
    <property type="entry name" value="VIT"/>
    <property type="match status" value="1"/>
</dbReference>
<dbReference type="SMART" id="SM00327">
    <property type="entry name" value="VWA"/>
    <property type="match status" value="1"/>
</dbReference>
<dbReference type="SUPFAM" id="SSF53300">
    <property type="entry name" value="vWA-like"/>
    <property type="match status" value="1"/>
</dbReference>
<dbReference type="PROSITE" id="PS51468">
    <property type="entry name" value="VIT"/>
    <property type="match status" value="1"/>
</dbReference>
<dbReference type="PROSITE" id="PS50234">
    <property type="entry name" value="VWFA"/>
    <property type="match status" value="1"/>
</dbReference>
<feature type="signal peptide" evidence="4">
    <location>
        <begin position="1"/>
        <end position="28"/>
    </location>
</feature>
<feature type="chain" id="PRO_0000016515" description="Inter-alpha-trypsin inhibitor heavy chain H1">
    <location>
        <begin position="29"/>
        <end position="663"/>
    </location>
</feature>
<feature type="propeptide" id="PRO_0000016516" evidence="1">
    <location>
        <begin position="664"/>
        <end position="902"/>
    </location>
</feature>
<feature type="domain" description="VIT" evidence="6">
    <location>
        <begin position="29"/>
        <end position="158"/>
    </location>
</feature>
<feature type="domain" description="VWFA" evidence="5">
    <location>
        <begin position="282"/>
        <end position="442"/>
    </location>
</feature>
<feature type="region of interest" description="Disordered" evidence="7">
    <location>
        <begin position="637"/>
        <end position="656"/>
    </location>
</feature>
<feature type="compositionally biased region" description="Polar residues" evidence="7">
    <location>
        <begin position="637"/>
        <end position="651"/>
    </location>
</feature>
<feature type="modified residue" description="Phosphoserine" evidence="2">
    <location>
        <position position="121"/>
    </location>
</feature>
<feature type="modified residue" description="Phosphothreonine" evidence="2">
    <location>
        <position position="394"/>
    </location>
</feature>
<feature type="modified residue" description="Phosphothreonine" evidence="2">
    <location>
        <position position="399"/>
    </location>
</feature>
<feature type="modified residue" description="Aspartate 1-(chondroitin 4-sulfate)-ester" evidence="1">
    <location>
        <position position="663"/>
    </location>
</feature>
<feature type="glycosylation site" description="S-linked (Hex...) cysteine" evidence="2">
    <location>
        <position position="52"/>
    </location>
</feature>
<feature type="glycosylation site" description="N-linked (GlcNAc...) asparagine" evidence="4">
    <location>
        <position position="69"/>
    </location>
</feature>
<feature type="glycosylation site" description="N-linked (GlcNAc...) asparagine" evidence="4">
    <location>
        <position position="277"/>
    </location>
</feature>
<feature type="glycosylation site" description="O-linked (GalNAc...) serine" evidence="3">
    <location>
        <position position="639"/>
    </location>
</feature>
<feature type="glycosylation site" description="O-linked (GalNAc...) threonine" evidence="3">
    <location>
        <position position="644"/>
    </location>
</feature>
<feature type="glycosylation site" description="N-linked (GlcNAc...) asparagine" evidence="4">
    <location>
        <position position="741"/>
    </location>
</feature>
<feature type="sequence conflict" description="In Ref. 2; CAA72309." evidence="8" ref="2">
    <original>E</original>
    <variation>D</variation>
    <location>
        <position position="432"/>
    </location>
</feature>
<feature type="sequence conflict" description="In Ref. 2; CAA72309." evidence="8" ref="2">
    <original>R</original>
    <variation>M</variation>
    <location>
        <position position="439"/>
    </location>
</feature>
<feature type="sequence conflict" description="In Ref. 2; CAA72309." evidence="8" ref="2">
    <original>S</original>
    <variation>A</variation>
    <location>
        <position position="456"/>
    </location>
</feature>
<feature type="sequence conflict" description="In Ref. 2; CAA72309." evidence="8" ref="2">
    <original>W</original>
    <variation>G</variation>
    <location>
        <position position="574"/>
    </location>
</feature>
<feature type="sequence conflict" description="In Ref. 2; CAA72309." evidence="8" ref="2">
    <original>C</original>
    <variation>S</variation>
    <location>
        <position position="712"/>
    </location>
</feature>
<feature type="sequence conflict" description="In Ref. 2." evidence="8" ref="2">
    <original>G</original>
    <variation>V</variation>
    <location>
        <position position="777"/>
    </location>
</feature>
<feature type="sequence conflict" description="In Ref. 2." evidence="8" ref="2">
    <original>VR</original>
    <variation>SV</variation>
    <location>
        <begin position="779"/>
        <end position="780"/>
    </location>
</feature>
<feature type="sequence conflict" description="In Ref. 2; CAA72309." evidence="8" ref="2">
    <original>L</original>
    <variation>V</variation>
    <location>
        <position position="793"/>
    </location>
</feature>
<feature type="sequence conflict" description="In Ref. 2; CAA72309." evidence="8" ref="2">
    <original>A</original>
    <variation>G</variation>
    <location>
        <position position="823"/>
    </location>
</feature>
<feature type="sequence conflict" description="In Ref. 2; CAA72309." evidence="8" ref="2">
    <original>I</original>
    <variation>L</variation>
    <location>
        <position position="836"/>
    </location>
</feature>
<feature type="sequence conflict" description="In Ref. 2; CAA72309." evidence="8" ref="2">
    <original>H</original>
    <variation>Y</variation>
    <location>
        <position position="893"/>
    </location>
</feature>
<reference key="1">
    <citation type="submission" date="1995-06" db="EMBL/GenBank/DDBJ databases">
        <authorList>
            <person name="Suzuki H."/>
            <person name="Hamasima N."/>
            <person name="Kimura M."/>
            <person name="Ozawa A."/>
            <person name="Yasue H."/>
        </authorList>
    </citation>
    <scope>NUCLEOTIDE SEQUENCE [MRNA]</scope>
    <source>
        <tissue>Liver</tissue>
    </source>
</reference>
<reference key="2">
    <citation type="submission" date="1997-03" db="EMBL/GenBank/DDBJ databases">
        <authorList>
            <person name="Gebhard W."/>
        </authorList>
    </citation>
    <scope>NUCLEOTIDE SEQUENCE [MRNA] OF 124-902</scope>
    <source>
        <tissue>Liver</tissue>
    </source>
</reference>
<name>ITIH1_PIG</name>
<gene>
    <name type="primary">ITIH1</name>
</gene>
<comment type="function">
    <text evidence="1">May act as a carrier of hyaluronan in serum or as a binding protein between hyaluronan and other matrix protein, including those on cell surfaces in tissues to regulate the localization, synthesis and degradation of hyaluronan which are essential to cells undergoing biological processes.</text>
</comment>
<comment type="subunit">
    <text evidence="2">I-alpha-I plasma protease inhibitors are assembled from one or two heavy chains (HC) and one light chain, bikunin. Inter-alpha-inhibitor (I-alpha-I) is composed of ITIH1/HC1, ITIH2/HC2 and bikunin. Interacts with TNFAIP6 (via Link and CUB domains).</text>
</comment>
<comment type="subcellular location">
    <subcellularLocation>
        <location evidence="1">Secreted</location>
    </subcellularLocation>
</comment>
<comment type="PTM">
    <text evidence="1">Heavy chains are linked to bikunin via chondroitin 4-sulfate esterified to the alpha-carboxyl of the C-terminal aspartate after propeptide cleavage.</text>
</comment>
<comment type="PTM">
    <text evidence="1">The S-linked glycan is composed of two 6-carbon sugars, possibly Glc or Gal.</text>
</comment>
<comment type="similarity">
    <text evidence="8">Belongs to the ITIH family.</text>
</comment>
<protein>
    <recommendedName>
        <fullName>Inter-alpha-trypsin inhibitor heavy chain H1</fullName>
        <shortName>ITI heavy chain H1</shortName>
        <shortName>ITI-HC1</shortName>
        <shortName>Inter-alpha-inhibitor heavy chain 1</shortName>
    </recommendedName>
</protein>
<evidence type="ECO:0000250" key="1"/>
<evidence type="ECO:0000250" key="2">
    <source>
        <dbReference type="UniProtKB" id="P19827"/>
    </source>
</evidence>
<evidence type="ECO:0000250" key="3">
    <source>
        <dbReference type="UniProtKB" id="Q0VCM5"/>
    </source>
</evidence>
<evidence type="ECO:0000255" key="4"/>
<evidence type="ECO:0000255" key="5">
    <source>
        <dbReference type="PROSITE-ProRule" id="PRU00219"/>
    </source>
</evidence>
<evidence type="ECO:0000255" key="6">
    <source>
        <dbReference type="PROSITE-ProRule" id="PRU00801"/>
    </source>
</evidence>
<evidence type="ECO:0000256" key="7">
    <source>
        <dbReference type="SAM" id="MobiDB-lite"/>
    </source>
</evidence>
<evidence type="ECO:0000305" key="8"/>